<comment type="function">
    <text evidence="1">Promotes cell proliferation.</text>
</comment>
<comment type="subcellular location">
    <subcellularLocation>
        <location evidence="1">Cell membrane</location>
    </subcellularLocation>
</comment>
<sequence>MESPAPGARCPVQEQRARWERKRACTARELLETERRYQEQLGLVATYFVAILRAKGTLRPPERQALFGPWELIYGASQELLPYLEGGRWGQGLEGFCNHLELYTQFAANVERSRTILQEQLKKNKHFRRFVRLQEGRPEFGGLQLQDLLPLPLQRLQQYENLAVALAENTGPNSPEHKQLTRAAQLISETAQRVHTIGQKQKNEQHLQRIQALLSGRQAKGLISGRWFLRQGWLLVVPPRGEPRPRMFFLFSDALLMAKPRPPLHLLQSGTFACRALYPMGECQLHRVFGHSGGPCGGLLSLSFPHEKLLLMSTDQEELSHWYHSLTLAISSQKN</sequence>
<protein>
    <recommendedName>
        <fullName>Rho guanine nucleotide exchange factor 39</fullName>
    </recommendedName>
</protein>
<reference key="1">
    <citation type="submission" date="2006-08" db="EMBL/GenBank/DDBJ databases">
        <authorList>
            <consortium name="NIH - Mammalian Gene Collection (MGC) project"/>
        </authorList>
    </citation>
    <scope>NUCLEOTIDE SEQUENCE [LARGE SCALE MRNA]</scope>
    <source>
        <strain>Hereford</strain>
        <tissue>Thymus</tissue>
    </source>
</reference>
<reference key="2">
    <citation type="journal article" date="2005" name="BMC Genomics">
        <title>Characterization of 954 bovine full-CDS cDNA sequences.</title>
        <authorList>
            <person name="Harhay G.P."/>
            <person name="Sonstegard T.S."/>
            <person name="Keele J.W."/>
            <person name="Heaton M.P."/>
            <person name="Clawson M.L."/>
            <person name="Snelling W.M."/>
            <person name="Wiedmann R.T."/>
            <person name="Van Tassell C.P."/>
            <person name="Smith T.P.L."/>
        </authorList>
    </citation>
    <scope>NUCLEOTIDE SEQUENCE [LARGE SCALE MRNA] OF 2-335</scope>
</reference>
<feature type="chain" id="PRO_0000291863" description="Rho guanine nucleotide exchange factor 39">
    <location>
        <begin position="1"/>
        <end position="335"/>
    </location>
</feature>
<feature type="domain" description="DH" evidence="2">
    <location>
        <begin position="22"/>
        <end position="197"/>
    </location>
</feature>
<feature type="domain" description="PH" evidence="3">
    <location>
        <begin position="227"/>
        <end position="331"/>
    </location>
</feature>
<organism>
    <name type="scientific">Bos taurus</name>
    <name type="common">Bovine</name>
    <dbReference type="NCBI Taxonomy" id="9913"/>
    <lineage>
        <taxon>Eukaryota</taxon>
        <taxon>Metazoa</taxon>
        <taxon>Chordata</taxon>
        <taxon>Craniata</taxon>
        <taxon>Vertebrata</taxon>
        <taxon>Euteleostomi</taxon>
        <taxon>Mammalia</taxon>
        <taxon>Eutheria</taxon>
        <taxon>Laurasiatheria</taxon>
        <taxon>Artiodactyla</taxon>
        <taxon>Ruminantia</taxon>
        <taxon>Pecora</taxon>
        <taxon>Bovidae</taxon>
        <taxon>Bovinae</taxon>
        <taxon>Bos</taxon>
    </lineage>
</organism>
<keyword id="KW-1003">Cell membrane</keyword>
<keyword id="KW-0344">Guanine-nucleotide releasing factor</keyword>
<keyword id="KW-0472">Membrane</keyword>
<keyword id="KW-1185">Reference proteome</keyword>
<accession>Q0P5E3</accession>
<accession>Q0V8A2</accession>
<dbReference type="EMBL" id="BC120169">
    <property type="protein sequence ID" value="AAI20170.1"/>
    <property type="molecule type" value="mRNA"/>
</dbReference>
<dbReference type="EMBL" id="BT026317">
    <property type="protein sequence ID" value="ABG81473.1"/>
    <property type="molecule type" value="mRNA"/>
</dbReference>
<dbReference type="RefSeq" id="NP_001073268.1">
    <property type="nucleotide sequence ID" value="NM_001079800.1"/>
</dbReference>
<dbReference type="SMR" id="Q0P5E3"/>
<dbReference type="FunCoup" id="Q0P5E3">
    <property type="interactions" value="1468"/>
</dbReference>
<dbReference type="STRING" id="9913.ENSBTAP00000015167"/>
<dbReference type="PaxDb" id="9913-ENSBTAP00000015167"/>
<dbReference type="GeneID" id="780881"/>
<dbReference type="KEGG" id="bta:780881"/>
<dbReference type="CTD" id="84904"/>
<dbReference type="VEuPathDB" id="HostDB:ENSBTAG00000011416"/>
<dbReference type="eggNOG" id="ENOG502QTR5">
    <property type="taxonomic scope" value="Eukaryota"/>
</dbReference>
<dbReference type="HOGENOM" id="CLU_052525_0_0_1"/>
<dbReference type="InParanoid" id="Q0P5E3"/>
<dbReference type="OMA" id="LLMCTDQ"/>
<dbReference type="OrthoDB" id="660555at2759"/>
<dbReference type="TreeFam" id="TF350447"/>
<dbReference type="Reactome" id="R-BTA-193648">
    <property type="pathway name" value="NRAGE signals death through JNK"/>
</dbReference>
<dbReference type="Reactome" id="R-BTA-416482">
    <property type="pathway name" value="G alpha (12/13) signalling events"/>
</dbReference>
<dbReference type="Reactome" id="R-BTA-9013149">
    <property type="pathway name" value="RAC1 GTPase cycle"/>
</dbReference>
<dbReference type="Proteomes" id="UP000009136">
    <property type="component" value="Chromosome 8"/>
</dbReference>
<dbReference type="Bgee" id="ENSBTAG00000011416">
    <property type="expression patterns" value="Expressed in abomasum and 106 other cell types or tissues"/>
</dbReference>
<dbReference type="GO" id="GO:0005886">
    <property type="term" value="C:plasma membrane"/>
    <property type="evidence" value="ECO:0000250"/>
    <property type="project" value="UniProtKB"/>
</dbReference>
<dbReference type="GO" id="GO:0005085">
    <property type="term" value="F:guanyl-nucleotide exchange factor activity"/>
    <property type="evidence" value="ECO:0007669"/>
    <property type="project" value="UniProtKB-KW"/>
</dbReference>
<dbReference type="GO" id="GO:0030335">
    <property type="term" value="P:positive regulation of cell migration"/>
    <property type="evidence" value="ECO:0000250"/>
    <property type="project" value="UniProtKB"/>
</dbReference>
<dbReference type="FunFam" id="2.30.29.30:FF:000339">
    <property type="entry name" value="Rho guanine nucleotide exchange factor 39"/>
    <property type="match status" value="1"/>
</dbReference>
<dbReference type="FunFam" id="1.20.900.10:FF:000030">
    <property type="entry name" value="rho guanine nucleotide exchange factor 39"/>
    <property type="match status" value="1"/>
</dbReference>
<dbReference type="Gene3D" id="1.20.900.10">
    <property type="entry name" value="Dbl homology (DH) domain"/>
    <property type="match status" value="1"/>
</dbReference>
<dbReference type="Gene3D" id="2.30.29.30">
    <property type="entry name" value="Pleckstrin-homology domain (PH domain)/Phosphotyrosine-binding domain (PTB)"/>
    <property type="match status" value="1"/>
</dbReference>
<dbReference type="InterPro" id="IPR042987">
    <property type="entry name" value="ARHGEF39"/>
</dbReference>
<dbReference type="InterPro" id="IPR035899">
    <property type="entry name" value="DBL_dom_sf"/>
</dbReference>
<dbReference type="InterPro" id="IPR000219">
    <property type="entry name" value="DH_dom"/>
</dbReference>
<dbReference type="InterPro" id="IPR011993">
    <property type="entry name" value="PH-like_dom_sf"/>
</dbReference>
<dbReference type="InterPro" id="IPR001849">
    <property type="entry name" value="PH_domain"/>
</dbReference>
<dbReference type="PANTHER" id="PTHR47056">
    <property type="entry name" value="RHO GUANINE NUCLEOTIDE EXCHANGE FACTOR 39"/>
    <property type="match status" value="1"/>
</dbReference>
<dbReference type="PANTHER" id="PTHR47056:SF1">
    <property type="entry name" value="RHO GUANINE NUCLEOTIDE EXCHANGE FACTOR 39"/>
    <property type="match status" value="1"/>
</dbReference>
<dbReference type="Pfam" id="PF00621">
    <property type="entry name" value="RhoGEF"/>
    <property type="match status" value="1"/>
</dbReference>
<dbReference type="SMART" id="SM00233">
    <property type="entry name" value="PH"/>
    <property type="match status" value="1"/>
</dbReference>
<dbReference type="SMART" id="SM00325">
    <property type="entry name" value="RhoGEF"/>
    <property type="match status" value="1"/>
</dbReference>
<dbReference type="SUPFAM" id="SSF48065">
    <property type="entry name" value="DBL homology domain (DH-domain)"/>
    <property type="match status" value="1"/>
</dbReference>
<dbReference type="SUPFAM" id="SSF50729">
    <property type="entry name" value="PH domain-like"/>
    <property type="match status" value="1"/>
</dbReference>
<dbReference type="PROSITE" id="PS50010">
    <property type="entry name" value="DH_2"/>
    <property type="match status" value="1"/>
</dbReference>
<dbReference type="PROSITE" id="PS50003">
    <property type="entry name" value="PH_DOMAIN"/>
    <property type="match status" value="1"/>
</dbReference>
<name>ARG39_BOVIN</name>
<proteinExistence type="evidence at transcript level"/>
<evidence type="ECO:0000250" key="1"/>
<evidence type="ECO:0000255" key="2">
    <source>
        <dbReference type="PROSITE-ProRule" id="PRU00062"/>
    </source>
</evidence>
<evidence type="ECO:0000255" key="3">
    <source>
        <dbReference type="PROSITE-ProRule" id="PRU00145"/>
    </source>
</evidence>
<gene>
    <name type="primary">ARHGEF39</name>
</gene>